<accession>Q66661</accession>
<dbReference type="EMBL" id="U20824">
    <property type="protein sequence ID" value="AAC13847.1"/>
    <property type="molecule type" value="Genomic_DNA"/>
</dbReference>
<dbReference type="PIR" id="S55654">
    <property type="entry name" value="S55654"/>
</dbReference>
<dbReference type="SMR" id="Q66661"/>
<dbReference type="KEGG" id="vg:1461060"/>
<dbReference type="Proteomes" id="UP000007083">
    <property type="component" value="Segment"/>
</dbReference>
<dbReference type="GO" id="GO:0006260">
    <property type="term" value="P:DNA replication"/>
    <property type="evidence" value="ECO:0007669"/>
    <property type="project" value="UniProtKB-KW"/>
</dbReference>
<dbReference type="Gene3D" id="3.70.10.10">
    <property type="match status" value="1"/>
</dbReference>
<dbReference type="InterPro" id="IPR007013">
    <property type="entry name" value="DNA_pol_proc_fac_herpes"/>
</dbReference>
<dbReference type="Pfam" id="PF04929">
    <property type="entry name" value="Herpes_DNAp_acc"/>
    <property type="match status" value="1"/>
</dbReference>
<protein>
    <recommendedName>
        <fullName>DNA polymerase processivity factor</fullName>
    </recommendedName>
</protein>
<proteinExistence type="inferred from homology"/>
<feature type="chain" id="PRO_0000406170" description="DNA polymerase processivity factor">
    <location>
        <begin position="1"/>
        <end position="414"/>
    </location>
</feature>
<feature type="region of interest" description="Disordered" evidence="2">
    <location>
        <begin position="327"/>
        <end position="414"/>
    </location>
</feature>
<feature type="compositionally biased region" description="Basic residues" evidence="2">
    <location>
        <begin position="389"/>
        <end position="405"/>
    </location>
</feature>
<organism>
    <name type="scientific">Equine herpesvirus 2 (strain 86/87)</name>
    <name type="common">EHV-2</name>
    <dbReference type="NCBI Taxonomy" id="82831"/>
    <lineage>
        <taxon>Viruses</taxon>
        <taxon>Duplodnaviria</taxon>
        <taxon>Heunggongvirae</taxon>
        <taxon>Peploviricota</taxon>
        <taxon>Herviviricetes</taxon>
        <taxon>Herpesvirales</taxon>
        <taxon>Orthoherpesviridae</taxon>
        <taxon>Gammaherpesvirinae</taxon>
        <taxon>Percavirus</taxon>
        <taxon>Percavirus equidgamma2</taxon>
        <taxon>Equid gammaherpesvirus 2</taxon>
    </lineage>
</organism>
<evidence type="ECO:0000250" key="1"/>
<evidence type="ECO:0000256" key="2">
    <source>
        <dbReference type="SAM" id="MobiDB-lite"/>
    </source>
</evidence>
<evidence type="ECO:0000305" key="3"/>
<keyword id="KW-0235">DNA replication</keyword>
<keyword id="KW-1185">Reference proteome</keyword>
<reference key="1">
    <citation type="journal article" date="1995" name="J. Mol. Biol.">
        <title>The DNA sequence of equine herpesvirus 2.</title>
        <authorList>
            <person name="Telford E.A.R."/>
            <person name="Watson M.S."/>
            <person name="Aird H.C."/>
            <person name="Perry J."/>
            <person name="Davison A.J."/>
        </authorList>
    </citation>
    <scope>NUCLEOTIDE SEQUENCE [LARGE SCALE GENOMIC DNA]</scope>
</reference>
<gene>
    <name type="primary">59</name>
</gene>
<sequence length="414" mass="45192">MAEEMEETHCMALNVENFKACAKIHNHVKNYLKKGLVQIVGFETEPVFQIMATACDGGILVFKVLNPFESFNVSYSRMETLSLSFKNQPHGNTYLYSKDLFGEAVKGASLTFLQRPGLCRPDFVRSDVLMDDDVTTSSHCTSLTSWSPPAHDIRAGTVMSKVVLSIKTCTMLQKWLKDQKSKGEPRCVRLCLNEILSVLVLSVGEASKTVHLKPVEGNPATSLLFADKQGDVCIISDDEAHDVSLDSLLAALGVCRIPALCLPCFNFHSNGVLEVVGLQFKSSKPASGELSVFLLRANPQVDFNGVPEGDVQTQEVSSVASTCRHLSESCSLDPPRTPELPGSPDTFKEIPGRSGSVHLERDLSCSDSEEETPKQKPAKAKPAAAPKRSEKRKREGGKKGPKAKSLKLTFNPLI</sequence>
<comment type="function">
    <text evidence="1">Increases the processivity of the viral polymerase, probably by acting as a sliding clamp that prevents dissociation of the polymerase from the active template.</text>
</comment>
<comment type="similarity">
    <text evidence="3">Belongs to the herpesviridae DNA polymerase accessory subunit family.</text>
</comment>
<name>VG59_EHV2</name>
<organismHost>
    <name type="scientific">Equus caballus</name>
    <name type="common">Horse</name>
    <dbReference type="NCBI Taxonomy" id="9796"/>
</organismHost>